<sequence>MQTYTIKPAQSVRGEIAVPGDKSISHRSIMLGSIARGTTTVCGFLRGEDNMATLNAFRAMGVDVRDDGETLRIEGKGLAGLSEPTDVLDCGNSGTSMRLMTGLLAGQRFFSVLTGDQYLRNRPMKRVLEPLSRMGATIFGRAGGDKAPLAVVGRGLTGVTYASPVSSAQVKSAILLAGLYADGETEVTEPHLSRDHSERMLRYFGADIETFAGGVKVRGRELTGRDITVPGDISSAAFFIVAALIVPGSELLIKGVGVNPTRTGIIDILTAMGGSIELLNCREISGEPVADLLVRASELKGIEIGGDLVPRAIDEFPVICVAASCAEGRTVIRDARELRVKETDRIAAMAVNLRKAGVDVVETENGMELIGVERLEGCTAESFGDHRIAMSMLIAGLAARGEITVNDTECIATSFPNFIALLEKVVVP</sequence>
<comment type="function">
    <text evidence="1">Catalyzes the transfer of the enolpyruvyl moiety of phosphoenolpyruvate (PEP) to the 5-hydroxyl of shikimate-3-phosphate (S3P) to produce enolpyruvyl shikimate-3-phosphate and inorganic phosphate.</text>
</comment>
<comment type="catalytic activity">
    <reaction evidence="1">
        <text>3-phosphoshikimate + phosphoenolpyruvate = 5-O-(1-carboxyvinyl)-3-phosphoshikimate + phosphate</text>
        <dbReference type="Rhea" id="RHEA:21256"/>
        <dbReference type="ChEBI" id="CHEBI:43474"/>
        <dbReference type="ChEBI" id="CHEBI:57701"/>
        <dbReference type="ChEBI" id="CHEBI:58702"/>
        <dbReference type="ChEBI" id="CHEBI:145989"/>
        <dbReference type="EC" id="2.5.1.19"/>
    </reaction>
    <physiologicalReaction direction="left-to-right" evidence="1">
        <dbReference type="Rhea" id="RHEA:21257"/>
    </physiologicalReaction>
</comment>
<comment type="pathway">
    <text evidence="1">Metabolic intermediate biosynthesis; chorismate biosynthesis; chorismate from D-erythrose 4-phosphate and phosphoenolpyruvate: step 6/7.</text>
</comment>
<comment type="subunit">
    <text evidence="1">Monomer.</text>
</comment>
<comment type="subcellular location">
    <subcellularLocation>
        <location evidence="1">Cytoplasm</location>
    </subcellularLocation>
</comment>
<comment type="similarity">
    <text evidence="1">Belongs to the EPSP synthase family.</text>
</comment>
<protein>
    <recommendedName>
        <fullName evidence="1">3-phosphoshikimate 1-carboxyvinyltransferase</fullName>
        <ecNumber evidence="1">2.5.1.19</ecNumber>
    </recommendedName>
    <alternativeName>
        <fullName evidence="1">5-enolpyruvylshikimate-3-phosphate synthase</fullName>
        <shortName evidence="1">EPSP synthase</shortName>
        <shortName evidence="1">EPSPS</shortName>
    </alternativeName>
</protein>
<gene>
    <name evidence="1" type="primary">aroA</name>
    <name type="ordered locus">Gura_1464</name>
</gene>
<reference key="1">
    <citation type="submission" date="2007-05" db="EMBL/GenBank/DDBJ databases">
        <title>Complete sequence of Geobacter uraniireducens Rf4.</title>
        <authorList>
            <consortium name="US DOE Joint Genome Institute"/>
            <person name="Copeland A."/>
            <person name="Lucas S."/>
            <person name="Lapidus A."/>
            <person name="Barry K."/>
            <person name="Detter J.C."/>
            <person name="Glavina del Rio T."/>
            <person name="Hammon N."/>
            <person name="Israni S."/>
            <person name="Dalin E."/>
            <person name="Tice H."/>
            <person name="Pitluck S."/>
            <person name="Chertkov O."/>
            <person name="Brettin T."/>
            <person name="Bruce D."/>
            <person name="Han C."/>
            <person name="Schmutz J."/>
            <person name="Larimer F."/>
            <person name="Land M."/>
            <person name="Hauser L."/>
            <person name="Kyrpides N."/>
            <person name="Mikhailova N."/>
            <person name="Shelobolina E."/>
            <person name="Aklujkar M."/>
            <person name="Lovley D."/>
            <person name="Richardson P."/>
        </authorList>
    </citation>
    <scope>NUCLEOTIDE SEQUENCE [LARGE SCALE GENOMIC DNA]</scope>
    <source>
        <strain>ATCC BAA-1134 / JCM 13001 / Rf4</strain>
    </source>
</reference>
<name>AROA_GEOUR</name>
<organism>
    <name type="scientific">Geotalea uraniireducens (strain Rf4)</name>
    <name type="common">Geobacter uraniireducens</name>
    <dbReference type="NCBI Taxonomy" id="351605"/>
    <lineage>
        <taxon>Bacteria</taxon>
        <taxon>Pseudomonadati</taxon>
        <taxon>Thermodesulfobacteriota</taxon>
        <taxon>Desulfuromonadia</taxon>
        <taxon>Geobacterales</taxon>
        <taxon>Geobacteraceae</taxon>
        <taxon>Geotalea</taxon>
    </lineage>
</organism>
<accession>A5GE08</accession>
<evidence type="ECO:0000255" key="1">
    <source>
        <dbReference type="HAMAP-Rule" id="MF_00210"/>
    </source>
</evidence>
<feature type="chain" id="PRO_1000077989" description="3-phosphoshikimate 1-carboxyvinyltransferase">
    <location>
        <begin position="1"/>
        <end position="428"/>
    </location>
</feature>
<feature type="active site" description="Proton acceptor" evidence="1">
    <location>
        <position position="314"/>
    </location>
</feature>
<feature type="binding site" evidence="1">
    <location>
        <position position="22"/>
    </location>
    <ligand>
        <name>3-phosphoshikimate</name>
        <dbReference type="ChEBI" id="CHEBI:145989"/>
    </ligand>
</feature>
<feature type="binding site" evidence="1">
    <location>
        <position position="22"/>
    </location>
    <ligand>
        <name>phosphoenolpyruvate</name>
        <dbReference type="ChEBI" id="CHEBI:58702"/>
    </ligand>
</feature>
<feature type="binding site" evidence="1">
    <location>
        <position position="23"/>
    </location>
    <ligand>
        <name>3-phosphoshikimate</name>
        <dbReference type="ChEBI" id="CHEBI:145989"/>
    </ligand>
</feature>
<feature type="binding site" evidence="1">
    <location>
        <position position="27"/>
    </location>
    <ligand>
        <name>3-phosphoshikimate</name>
        <dbReference type="ChEBI" id="CHEBI:145989"/>
    </ligand>
</feature>
<feature type="binding site" evidence="1">
    <location>
        <position position="94"/>
    </location>
    <ligand>
        <name>phosphoenolpyruvate</name>
        <dbReference type="ChEBI" id="CHEBI:58702"/>
    </ligand>
</feature>
<feature type="binding site" evidence="1">
    <location>
        <position position="122"/>
    </location>
    <ligand>
        <name>phosphoenolpyruvate</name>
        <dbReference type="ChEBI" id="CHEBI:58702"/>
    </ligand>
</feature>
<feature type="binding site" evidence="1">
    <location>
        <position position="167"/>
    </location>
    <ligand>
        <name>3-phosphoshikimate</name>
        <dbReference type="ChEBI" id="CHEBI:145989"/>
    </ligand>
</feature>
<feature type="binding site" evidence="1">
    <location>
        <position position="169"/>
    </location>
    <ligand>
        <name>3-phosphoshikimate</name>
        <dbReference type="ChEBI" id="CHEBI:145989"/>
    </ligand>
</feature>
<feature type="binding site" evidence="1">
    <location>
        <position position="169"/>
    </location>
    <ligand>
        <name>phosphoenolpyruvate</name>
        <dbReference type="ChEBI" id="CHEBI:58702"/>
    </ligand>
</feature>
<feature type="binding site" evidence="1">
    <location>
        <position position="314"/>
    </location>
    <ligand>
        <name>3-phosphoshikimate</name>
        <dbReference type="ChEBI" id="CHEBI:145989"/>
    </ligand>
</feature>
<feature type="binding site" evidence="1">
    <location>
        <position position="341"/>
    </location>
    <ligand>
        <name>3-phosphoshikimate</name>
        <dbReference type="ChEBI" id="CHEBI:145989"/>
    </ligand>
</feature>
<feature type="binding site" evidence="1">
    <location>
        <position position="345"/>
    </location>
    <ligand>
        <name>phosphoenolpyruvate</name>
        <dbReference type="ChEBI" id="CHEBI:58702"/>
    </ligand>
</feature>
<feature type="binding site" evidence="1">
    <location>
        <position position="387"/>
    </location>
    <ligand>
        <name>phosphoenolpyruvate</name>
        <dbReference type="ChEBI" id="CHEBI:58702"/>
    </ligand>
</feature>
<proteinExistence type="inferred from homology"/>
<dbReference type="EC" id="2.5.1.19" evidence="1"/>
<dbReference type="EMBL" id="CP000698">
    <property type="protein sequence ID" value="ABQ25663.1"/>
    <property type="molecule type" value="Genomic_DNA"/>
</dbReference>
<dbReference type="RefSeq" id="WP_011938379.1">
    <property type="nucleotide sequence ID" value="NC_009483.1"/>
</dbReference>
<dbReference type="SMR" id="A5GE08"/>
<dbReference type="STRING" id="351605.Gura_1464"/>
<dbReference type="KEGG" id="gur:Gura_1464"/>
<dbReference type="HOGENOM" id="CLU_024321_0_1_7"/>
<dbReference type="OrthoDB" id="9809920at2"/>
<dbReference type="UniPathway" id="UPA00053">
    <property type="reaction ID" value="UER00089"/>
</dbReference>
<dbReference type="Proteomes" id="UP000006695">
    <property type="component" value="Chromosome"/>
</dbReference>
<dbReference type="GO" id="GO:0005737">
    <property type="term" value="C:cytoplasm"/>
    <property type="evidence" value="ECO:0007669"/>
    <property type="project" value="UniProtKB-SubCell"/>
</dbReference>
<dbReference type="GO" id="GO:0003866">
    <property type="term" value="F:3-phosphoshikimate 1-carboxyvinyltransferase activity"/>
    <property type="evidence" value="ECO:0007669"/>
    <property type="project" value="UniProtKB-UniRule"/>
</dbReference>
<dbReference type="GO" id="GO:0008652">
    <property type="term" value="P:amino acid biosynthetic process"/>
    <property type="evidence" value="ECO:0007669"/>
    <property type="project" value="UniProtKB-KW"/>
</dbReference>
<dbReference type="GO" id="GO:0009073">
    <property type="term" value="P:aromatic amino acid family biosynthetic process"/>
    <property type="evidence" value="ECO:0007669"/>
    <property type="project" value="UniProtKB-KW"/>
</dbReference>
<dbReference type="GO" id="GO:0009423">
    <property type="term" value="P:chorismate biosynthetic process"/>
    <property type="evidence" value="ECO:0007669"/>
    <property type="project" value="UniProtKB-UniRule"/>
</dbReference>
<dbReference type="CDD" id="cd01556">
    <property type="entry name" value="EPSP_synthase"/>
    <property type="match status" value="1"/>
</dbReference>
<dbReference type="FunFam" id="3.65.10.10:FF:000005">
    <property type="entry name" value="3-phosphoshikimate 1-carboxyvinyltransferase"/>
    <property type="match status" value="1"/>
</dbReference>
<dbReference type="FunFam" id="3.65.10.10:FF:000006">
    <property type="entry name" value="3-phosphoshikimate 1-carboxyvinyltransferase"/>
    <property type="match status" value="1"/>
</dbReference>
<dbReference type="Gene3D" id="3.65.10.10">
    <property type="entry name" value="Enolpyruvate transferase domain"/>
    <property type="match status" value="2"/>
</dbReference>
<dbReference type="HAMAP" id="MF_00210">
    <property type="entry name" value="EPSP_synth"/>
    <property type="match status" value="1"/>
</dbReference>
<dbReference type="InterPro" id="IPR001986">
    <property type="entry name" value="Enolpyruvate_Tfrase_dom"/>
</dbReference>
<dbReference type="InterPro" id="IPR036968">
    <property type="entry name" value="Enolpyruvate_Tfrase_sf"/>
</dbReference>
<dbReference type="InterPro" id="IPR006264">
    <property type="entry name" value="EPSP_synthase"/>
</dbReference>
<dbReference type="InterPro" id="IPR023193">
    <property type="entry name" value="EPSP_synthase_CS"/>
</dbReference>
<dbReference type="InterPro" id="IPR013792">
    <property type="entry name" value="RNA3'P_cycl/enolpyr_Trfase_a/b"/>
</dbReference>
<dbReference type="NCBIfam" id="TIGR01356">
    <property type="entry name" value="aroA"/>
    <property type="match status" value="1"/>
</dbReference>
<dbReference type="PANTHER" id="PTHR21090">
    <property type="entry name" value="AROM/DEHYDROQUINATE SYNTHASE"/>
    <property type="match status" value="1"/>
</dbReference>
<dbReference type="PANTHER" id="PTHR21090:SF5">
    <property type="entry name" value="PENTAFUNCTIONAL AROM POLYPEPTIDE"/>
    <property type="match status" value="1"/>
</dbReference>
<dbReference type="Pfam" id="PF00275">
    <property type="entry name" value="EPSP_synthase"/>
    <property type="match status" value="1"/>
</dbReference>
<dbReference type="PIRSF" id="PIRSF000505">
    <property type="entry name" value="EPSPS"/>
    <property type="match status" value="1"/>
</dbReference>
<dbReference type="SUPFAM" id="SSF55205">
    <property type="entry name" value="EPT/RTPC-like"/>
    <property type="match status" value="1"/>
</dbReference>
<dbReference type="PROSITE" id="PS00104">
    <property type="entry name" value="EPSP_SYNTHASE_1"/>
    <property type="match status" value="1"/>
</dbReference>
<dbReference type="PROSITE" id="PS00885">
    <property type="entry name" value="EPSP_SYNTHASE_2"/>
    <property type="match status" value="1"/>
</dbReference>
<keyword id="KW-0028">Amino-acid biosynthesis</keyword>
<keyword id="KW-0057">Aromatic amino acid biosynthesis</keyword>
<keyword id="KW-0963">Cytoplasm</keyword>
<keyword id="KW-1185">Reference proteome</keyword>
<keyword id="KW-0808">Transferase</keyword>